<comment type="function">
    <text evidence="1 3 4 5 6 8">Acts as a sequence specific DNA binding transcriptional activator or repressor. The isoforms contain a varying set of transactivation and auto-regulating transactivation inhibiting domains thus showing an isoform specific activity. May be required in conjunction with TP73/p73 for initiation of p53/TP53 dependent apoptosis in response to genotoxic insults and the presence of activated oncogenes. Involved in Notch signaling by probably inducing JAG1 and JAG2. Activates transcription of the p21 promoter (By similarity). Activates RIPK4 transcription. Plays a role in the regulation of epithelial morphogenesis. The ratio of DeltaN-type and TA*-type isoforms may govern the maintenance of epithelial stem cell compartments and regulate the initiation of epithelial stratification from the undifferentiated embryonal ectoderm. Required for limb formation from the apical ectodermal ridge.</text>
</comment>
<comment type="cofactor">
    <cofactor evidence="1">
        <name>Zn(2+)</name>
        <dbReference type="ChEBI" id="CHEBI:29105"/>
    </cofactor>
    <text evidence="1">Binds 1 zinc ion per subunit.</text>
</comment>
<comment type="subunit">
    <text evidence="1 7">Binds DNA as a homotetramer. Isoform composition of the tetramer may determine transactivation activity. Interacts with HIPK2. Interacts with SSRP1, leading to stimulate coactivator activity. Interacts with PDS5A. Interacts (via activation domain) with NOC2L (By similarity). Interacts with WWP1.</text>
</comment>
<comment type="interaction">
    <interactant intactId="EBI-2338025">
        <id>O88898</id>
    </interactant>
    <interactant intactId="EBI-604411">
        <id>Q9ESJ1</id>
        <label>Cables1</label>
    </interactant>
    <organismsDiffer>false</organismsDiffer>
    <experiments>2</experiments>
</comment>
<comment type="interaction">
    <interactant intactId="EBI-2338025">
        <id>O88898</id>
    </interactant>
    <interactant intactId="EBI-2338025">
        <id>O88898</id>
        <label>Tp63</label>
    </interactant>
    <organismsDiffer>false</organismsDiffer>
    <experiments>2</experiments>
</comment>
<comment type="interaction">
    <interactant intactId="EBI-2338025">
        <id>O88898</id>
    </interactant>
    <interactant intactId="EBI-366083">
        <id>P04637</id>
        <label>TP53</label>
    </interactant>
    <organismsDiffer>true</organismsDiffer>
    <experiments>2</experiments>
</comment>
<comment type="interaction">
    <interactant intactId="EBI-3863990">
        <id>O88898-1</id>
    </interactant>
    <interactant intactId="EBI-3863990">
        <id>O88898-1</id>
        <label>Tp63</label>
    </interactant>
    <organismsDiffer>false</organismsDiffer>
    <experiments>19</experiments>
</comment>
<comment type="interaction">
    <interactant intactId="EBI-2338228">
        <id>O88898-2</id>
    </interactant>
    <interactant intactId="EBI-2338228">
        <id>O88898-2</id>
        <label>Tp63</label>
    </interactant>
    <organismsDiffer>false</organismsDiffer>
    <experiments>2</experiments>
</comment>
<comment type="interaction">
    <interactant intactId="EBI-2338228">
        <id>O88898-2</id>
    </interactant>
    <interactant intactId="EBI-477430">
        <id>Q92831</id>
        <label>KAT2B</label>
    </interactant>
    <organismsDiffer>true</organismsDiffer>
    <experiments>3</experiments>
</comment>
<comment type="interaction">
    <interactant intactId="EBI-2338240">
        <id>O88898-5</id>
    </interactant>
    <interactant intactId="EBI-2338240">
        <id>O88898-5</id>
        <label>Tp63</label>
    </interactant>
    <organismsDiffer>false</organismsDiffer>
    <experiments>5</experiments>
</comment>
<comment type="subcellular location">
    <subcellularLocation>
        <location evidence="6">Nucleus</location>
    </subcellularLocation>
</comment>
<comment type="alternative products">
    <event type="alternative promoter"/>
    <event type="alternative splicing"/>
    <isoform>
        <id>O88898-1</id>
        <name>1</name>
        <name>TA*-alpha</name>
        <name>TA*p63alpha</name>
        <sequence type="displayed"/>
    </isoform>
    <isoform>
        <id>O88898-2</id>
        <name>2</name>
        <name>DeltaN-alpha</name>
        <sequence type="described" ref="VSP_012471"/>
    </isoform>
    <isoform>
        <id>O88898-3</id>
        <name>3</name>
        <name>TA*-beta</name>
        <name>TA*p63beta</name>
        <sequence type="described" ref="VSP_012474"/>
    </isoform>
    <isoform>
        <id>O88898-4</id>
        <name>4</name>
        <name>DeltaN-beta</name>
        <sequence type="described" ref="VSP_012471 VSP_012474"/>
    </isoform>
    <isoform>
        <id>O88898-5</id>
        <name>5</name>
        <name>TA*-gamma</name>
        <name>TA*p63gamma</name>
        <sequence type="described" ref="VSP_012472 VSP_012473"/>
    </isoform>
    <isoform>
        <id>O88898-6</id>
        <name>6</name>
        <name>DeltaN-gamma</name>
        <sequence type="described" ref="VSP_012471 VSP_012472 VSP_012473"/>
    </isoform>
</comment>
<comment type="tissue specificity">
    <text evidence="11">Widely expressed, notably in thymus, prostate, placenta and skeletal muscle, although the precise isoform varies according to tissue type. Progenitor cell layers of skin, breast and prostate express high levels of DeltaN-type isoforms.</text>
</comment>
<comment type="developmental stage">
    <text evidence="6 9">Expressed in the basal layer and a small number of cells in the spinous layer of the tongue at P20.</text>
</comment>
<comment type="developmental stage">
    <molecule>Isoform 1</molecule>
    <text evidence="6">Expressed in the epidermis from 7.5 dpc, prior to onset of epithelial stratification.</text>
</comment>
<comment type="developmental stage">
    <molecule>Isoform 2</molecule>
    <text evidence="6">Expressed in the epidermis from 9.5 dpc, after the onset of epithelial stratification but prior to terminal differentiation.</text>
</comment>
<comment type="developmental stage">
    <molecule>Isoform 3</molecule>
    <text evidence="6">Expressed in the epidermis from 7.5 dpc, prior to onset of epithelial stratification.</text>
</comment>
<comment type="developmental stage">
    <molecule>Isoform 4</molecule>
    <text evidence="6">Expressed in the epidermis from 9.5 dpc, after the onset of epithelial stratification but prior to terminal differentiation.</text>
</comment>
<comment type="developmental stage">
    <molecule>Isoform 5</molecule>
    <text evidence="6">Expressed in the epidermis from 7.5 dpc, prior to onset of epithelial stratification.</text>
</comment>
<comment type="developmental stage">
    <molecule>Isoform 6</molecule>
    <text evidence="6">Expressed in the epidermis from 9.5 dpc, after the onset of epithelial stratification but prior to terminal differentiation.</text>
</comment>
<comment type="induction">
    <text evidence="5">Induced by DNA damaging agents.</text>
</comment>
<comment type="domain">
    <text evidence="1">The transactivation inhibitory domain (TID) can interact with, and inhibit the activity of the N-terminal transcriptional activation domain of TA*-type isoforms.</text>
</comment>
<comment type="PTM">
    <text evidence="1">May be sumoylated.</text>
</comment>
<comment type="PTM">
    <text evidence="7">Ubiquitinated. Polyubiquitination involves WWP1 and leads to proteasomal degradation of this protein.</text>
</comment>
<comment type="miscellaneous">
    <molecule>Isoform 1</molecule>
    <text>Produced by alternative promoter usage.</text>
</comment>
<comment type="miscellaneous">
    <molecule>Isoform 2</molecule>
    <text evidence="15">Produced by alternative promoter usage.</text>
</comment>
<comment type="miscellaneous">
    <molecule>Isoform 3</molecule>
    <text evidence="15">Produced by alternative splicing of isoform 1.</text>
</comment>
<comment type="miscellaneous">
    <molecule>Isoform 4</molecule>
    <text evidence="15">Produced by alternative splicing of isoform 2.</text>
</comment>
<comment type="miscellaneous">
    <molecule>Isoform 5</molecule>
    <text evidence="15">Produced by alternative splicing of isoform 1.</text>
</comment>
<comment type="miscellaneous">
    <molecule>Isoform 6</molecule>
    <text evidence="15">Produced by alternative splicing of isoform 2.</text>
</comment>
<comment type="similarity">
    <text evidence="15">Belongs to the p53 family.</text>
</comment>
<comment type="sequence caution" evidence="15">
    <conflict type="miscellaneous discrepancy">
        <sequence resource="EMBL-CDS" id="BAC33397"/>
    </conflict>
    <text>Intron retention.</text>
</comment>
<organism>
    <name type="scientific">Mus musculus</name>
    <name type="common">Mouse</name>
    <dbReference type="NCBI Taxonomy" id="10090"/>
    <lineage>
        <taxon>Eukaryota</taxon>
        <taxon>Metazoa</taxon>
        <taxon>Chordata</taxon>
        <taxon>Craniata</taxon>
        <taxon>Vertebrata</taxon>
        <taxon>Euteleostomi</taxon>
        <taxon>Mammalia</taxon>
        <taxon>Eutheria</taxon>
        <taxon>Euarchontoglires</taxon>
        <taxon>Glires</taxon>
        <taxon>Rodentia</taxon>
        <taxon>Myomorpha</taxon>
        <taxon>Muroidea</taxon>
        <taxon>Muridae</taxon>
        <taxon>Murinae</taxon>
        <taxon>Mus</taxon>
        <taxon>Mus</taxon>
    </lineage>
</organism>
<dbReference type="EMBL" id="AF075434">
    <property type="protein sequence ID" value="AAC62639.1"/>
    <property type="molecule type" value="mRNA"/>
</dbReference>
<dbReference type="EMBL" id="AF075435">
    <property type="protein sequence ID" value="AAC62640.1"/>
    <property type="molecule type" value="mRNA"/>
</dbReference>
<dbReference type="EMBL" id="AF075436">
    <property type="protein sequence ID" value="AAC62641.1"/>
    <property type="molecule type" value="mRNA"/>
</dbReference>
<dbReference type="EMBL" id="AF075437">
    <property type="protein sequence ID" value="AAC62642.1"/>
    <property type="molecule type" value="mRNA"/>
</dbReference>
<dbReference type="EMBL" id="AF075438">
    <property type="protein sequence ID" value="AAC62643.1"/>
    <property type="molecule type" value="mRNA"/>
</dbReference>
<dbReference type="EMBL" id="AF075439">
    <property type="protein sequence ID" value="AAC62644.1"/>
    <property type="molecule type" value="mRNA"/>
</dbReference>
<dbReference type="EMBL" id="AB010152">
    <property type="protein sequence ID" value="BAA32432.1"/>
    <property type="molecule type" value="mRNA"/>
</dbReference>
<dbReference type="EMBL" id="AF533892">
    <property type="protein sequence ID" value="AAP87982.1"/>
    <property type="molecule type" value="Genomic_DNA"/>
</dbReference>
<dbReference type="EMBL" id="AF533892">
    <property type="protein sequence ID" value="AAP87985.1"/>
    <property type="molecule type" value="Genomic_DNA"/>
</dbReference>
<dbReference type="EMBL" id="AF533892">
    <property type="protein sequence ID" value="AAP87983.1"/>
    <property type="molecule type" value="Genomic_DNA"/>
</dbReference>
<dbReference type="EMBL" id="AF533892">
    <property type="protein sequence ID" value="AAP87984.1"/>
    <property type="molecule type" value="Genomic_DNA"/>
</dbReference>
<dbReference type="EMBL" id="AF533892">
    <property type="protein sequence ID" value="AAP87986.1"/>
    <property type="molecule type" value="Genomic_DNA"/>
</dbReference>
<dbReference type="EMBL" id="AF533892">
    <property type="protein sequence ID" value="AAP87987.1"/>
    <property type="molecule type" value="Genomic_DNA"/>
</dbReference>
<dbReference type="EMBL" id="AK048623">
    <property type="protein sequence ID" value="BAC33397.1"/>
    <property type="status" value="ALT_SEQ"/>
    <property type="molecule type" value="mRNA"/>
</dbReference>
<dbReference type="CCDS" id="CCDS28085.1">
    <molecule id="O88898-2"/>
</dbReference>
<dbReference type="CCDS" id="CCDS49808.1">
    <molecule id="O88898-5"/>
</dbReference>
<dbReference type="CCDS" id="CCDS49809.1">
    <molecule id="O88898-1"/>
</dbReference>
<dbReference type="CCDS" id="CCDS49810.1">
    <molecule id="O88898-3"/>
</dbReference>
<dbReference type="RefSeq" id="NP_001120731.1">
    <molecule id="O88898-1"/>
    <property type="nucleotide sequence ID" value="NM_001127259.1"/>
</dbReference>
<dbReference type="RefSeq" id="NP_001120732.1">
    <molecule id="O88898-3"/>
    <property type="nucleotide sequence ID" value="NM_001127260.1"/>
</dbReference>
<dbReference type="RefSeq" id="NP_001120733.1">
    <molecule id="O88898-5"/>
    <property type="nucleotide sequence ID" value="NM_001127261.1"/>
</dbReference>
<dbReference type="RefSeq" id="NP_001120734.1">
    <molecule id="O88898-4"/>
    <property type="nucleotide sequence ID" value="NM_001127262.1"/>
</dbReference>
<dbReference type="RefSeq" id="NP_001120736.1">
    <property type="nucleotide sequence ID" value="NM_001127264.1"/>
</dbReference>
<dbReference type="RefSeq" id="NP_001120737.1">
    <molecule id="O88898-6"/>
    <property type="nucleotide sequence ID" value="NM_001127265.1"/>
</dbReference>
<dbReference type="RefSeq" id="NP_035771.1">
    <molecule id="O88898-2"/>
    <property type="nucleotide sequence ID" value="NM_011641.2"/>
</dbReference>
<dbReference type="PDB" id="5N2O">
    <property type="method" value="NMR"/>
    <property type="chains" value="A=545-609"/>
</dbReference>
<dbReference type="PDBsum" id="5N2O"/>
<dbReference type="BMRB" id="O88898"/>
<dbReference type="SMR" id="O88898"/>
<dbReference type="BioGRID" id="204325">
    <property type="interactions" value="8"/>
</dbReference>
<dbReference type="ELM" id="O88898"/>
<dbReference type="FunCoup" id="O88898">
    <property type="interactions" value="834"/>
</dbReference>
<dbReference type="IntAct" id="O88898">
    <property type="interactions" value="7"/>
</dbReference>
<dbReference type="MINT" id="O88898"/>
<dbReference type="STRING" id="10090.ENSMUSP00000110965"/>
<dbReference type="GlyGen" id="O88898">
    <property type="glycosylation" value="1 site"/>
</dbReference>
<dbReference type="iPTMnet" id="O88898"/>
<dbReference type="PhosphoSitePlus" id="O88898"/>
<dbReference type="jPOST" id="O88898"/>
<dbReference type="PaxDb" id="10090-ENSMUSP00000110965"/>
<dbReference type="ProteomicsDB" id="294307">
    <molecule id="O88898-1"/>
</dbReference>
<dbReference type="ProteomicsDB" id="294308">
    <molecule id="O88898-2"/>
</dbReference>
<dbReference type="ProteomicsDB" id="294309">
    <molecule id="O88898-3"/>
</dbReference>
<dbReference type="ProteomicsDB" id="294310">
    <molecule id="O88898-4"/>
</dbReference>
<dbReference type="ProteomicsDB" id="294311">
    <molecule id="O88898-5"/>
</dbReference>
<dbReference type="ProteomicsDB" id="294312">
    <molecule id="O88898-6"/>
</dbReference>
<dbReference type="Antibodypedia" id="1750">
    <property type="antibodies" value="1080 antibodies from 50 providers"/>
</dbReference>
<dbReference type="DNASU" id="22061"/>
<dbReference type="Ensembl" id="ENSMUST00000040231.13">
    <molecule id="O88898-2"/>
    <property type="protein sequence ID" value="ENSMUSP00000038117.7"/>
    <property type="gene ID" value="ENSMUSG00000022510.15"/>
</dbReference>
<dbReference type="Ensembl" id="ENSMUST00000065523.12">
    <molecule id="O88898-3"/>
    <property type="protein sequence ID" value="ENSMUSP00000067005.6"/>
    <property type="gene ID" value="ENSMUSG00000022510.15"/>
</dbReference>
<dbReference type="Ensembl" id="ENSMUST00000115308.9">
    <molecule id="O88898-5"/>
    <property type="protein sequence ID" value="ENSMUSP00000110963.3"/>
    <property type="gene ID" value="ENSMUSG00000022510.15"/>
</dbReference>
<dbReference type="Ensembl" id="ENSMUST00000115310.9">
    <molecule id="O88898-1"/>
    <property type="protein sequence ID" value="ENSMUSP00000110965.3"/>
    <property type="gene ID" value="ENSMUSG00000022510.15"/>
</dbReference>
<dbReference type="GeneID" id="22061"/>
<dbReference type="KEGG" id="mmu:22061"/>
<dbReference type="UCSC" id="uc007yuo.2">
    <molecule id="O88898-5"/>
    <property type="organism name" value="mouse"/>
</dbReference>
<dbReference type="UCSC" id="uc007yup.2">
    <molecule id="O88898-1"/>
    <property type="organism name" value="mouse"/>
</dbReference>
<dbReference type="UCSC" id="uc007yuq.2">
    <molecule id="O88898-3"/>
    <property type="organism name" value="mouse"/>
</dbReference>
<dbReference type="UCSC" id="uc007yut.2">
    <molecule id="O88898-6"/>
    <property type="organism name" value="mouse"/>
</dbReference>
<dbReference type="UCSC" id="uc007yuu.2">
    <molecule id="O88898-2"/>
    <property type="organism name" value="mouse"/>
</dbReference>
<dbReference type="UCSC" id="uc007yuv.2">
    <molecule id="O88898-4"/>
    <property type="organism name" value="mouse"/>
</dbReference>
<dbReference type="AGR" id="MGI:1330810"/>
<dbReference type="CTD" id="22061"/>
<dbReference type="MGI" id="MGI:1330810">
    <property type="gene designation" value="Trp63"/>
</dbReference>
<dbReference type="VEuPathDB" id="HostDB:ENSMUSG00000022510"/>
<dbReference type="eggNOG" id="ENOG502QQ48">
    <property type="taxonomic scope" value="Eukaryota"/>
</dbReference>
<dbReference type="GeneTree" id="ENSGT00950000183153"/>
<dbReference type="HOGENOM" id="CLU_019621_1_0_1"/>
<dbReference type="InParanoid" id="O88898"/>
<dbReference type="OMA" id="DFFSQDV"/>
<dbReference type="OrthoDB" id="5915660at2759"/>
<dbReference type="PhylomeDB" id="O88898"/>
<dbReference type="TreeFam" id="TF106101"/>
<dbReference type="Reactome" id="R-MMU-6804759">
    <property type="pathway name" value="Regulation of TP53 Activity through Association with Co-factors"/>
</dbReference>
<dbReference type="BioGRID-ORCS" id="22061">
    <property type="hits" value="2 hits in 78 CRISPR screens"/>
</dbReference>
<dbReference type="ChiTaRS" id="Trp63">
    <property type="organism name" value="mouse"/>
</dbReference>
<dbReference type="PRO" id="PR:O88898"/>
<dbReference type="Proteomes" id="UP000000589">
    <property type="component" value="Chromosome 16"/>
</dbReference>
<dbReference type="RNAct" id="O88898">
    <property type="molecule type" value="protein"/>
</dbReference>
<dbReference type="Bgee" id="ENSMUSG00000022510">
    <property type="expression patterns" value="Expressed in hair follicle and 165 other cell types or tissues"/>
</dbReference>
<dbReference type="ExpressionAtlas" id="O88898">
    <property type="expression patterns" value="baseline and differential"/>
</dbReference>
<dbReference type="GO" id="GO:0000785">
    <property type="term" value="C:chromatin"/>
    <property type="evidence" value="ECO:0007669"/>
    <property type="project" value="Ensembl"/>
</dbReference>
<dbReference type="GO" id="GO:0005737">
    <property type="term" value="C:cytoplasm"/>
    <property type="evidence" value="ECO:0000266"/>
    <property type="project" value="MGI"/>
</dbReference>
<dbReference type="GO" id="GO:0030425">
    <property type="term" value="C:dendrite"/>
    <property type="evidence" value="ECO:0007669"/>
    <property type="project" value="Ensembl"/>
</dbReference>
<dbReference type="GO" id="GO:0005654">
    <property type="term" value="C:nucleoplasm"/>
    <property type="evidence" value="ECO:0007669"/>
    <property type="project" value="Ensembl"/>
</dbReference>
<dbReference type="GO" id="GO:0005634">
    <property type="term" value="C:nucleus"/>
    <property type="evidence" value="ECO:0000314"/>
    <property type="project" value="MGI"/>
</dbReference>
<dbReference type="GO" id="GO:0032991">
    <property type="term" value="C:protein-containing complex"/>
    <property type="evidence" value="ECO:0007669"/>
    <property type="project" value="Ensembl"/>
</dbReference>
<dbReference type="GO" id="GO:0003682">
    <property type="term" value="F:chromatin binding"/>
    <property type="evidence" value="ECO:0000314"/>
    <property type="project" value="MGI"/>
</dbReference>
<dbReference type="GO" id="GO:0003684">
    <property type="term" value="F:damaged DNA binding"/>
    <property type="evidence" value="ECO:0000314"/>
    <property type="project" value="MGI"/>
</dbReference>
<dbReference type="GO" id="GO:0003677">
    <property type="term" value="F:DNA binding"/>
    <property type="evidence" value="ECO:0000314"/>
    <property type="project" value="MGI"/>
</dbReference>
<dbReference type="GO" id="GO:0001228">
    <property type="term" value="F:DNA-binding transcription activator activity, RNA polymerase II-specific"/>
    <property type="evidence" value="ECO:0000314"/>
    <property type="project" value="MGI"/>
</dbReference>
<dbReference type="GO" id="GO:0042802">
    <property type="term" value="F:identical protein binding"/>
    <property type="evidence" value="ECO:0000353"/>
    <property type="project" value="IntAct"/>
</dbReference>
<dbReference type="GO" id="GO:0097371">
    <property type="term" value="F:MDM2/MDM4 family protein binding"/>
    <property type="evidence" value="ECO:0007669"/>
    <property type="project" value="Ensembl"/>
</dbReference>
<dbReference type="GO" id="GO:0046872">
    <property type="term" value="F:metal ion binding"/>
    <property type="evidence" value="ECO:0007669"/>
    <property type="project" value="UniProtKB-KW"/>
</dbReference>
<dbReference type="GO" id="GO:0002039">
    <property type="term" value="F:p53 binding"/>
    <property type="evidence" value="ECO:0007669"/>
    <property type="project" value="Ensembl"/>
</dbReference>
<dbReference type="GO" id="GO:1990841">
    <property type="term" value="F:promoter-specific chromatin binding"/>
    <property type="evidence" value="ECO:0000314"/>
    <property type="project" value="MGI"/>
</dbReference>
<dbReference type="GO" id="GO:0043565">
    <property type="term" value="F:sequence-specific DNA binding"/>
    <property type="evidence" value="ECO:0000314"/>
    <property type="project" value="MGI"/>
</dbReference>
<dbReference type="GO" id="GO:0000976">
    <property type="term" value="F:transcription cis-regulatory region binding"/>
    <property type="evidence" value="ECO:0007669"/>
    <property type="project" value="InterPro"/>
</dbReference>
<dbReference type="GO" id="GO:0050699">
    <property type="term" value="F:WW domain binding"/>
    <property type="evidence" value="ECO:0007669"/>
    <property type="project" value="Ensembl"/>
</dbReference>
<dbReference type="GO" id="GO:0048646">
    <property type="term" value="P:anatomical structure formation involved in morphogenesis"/>
    <property type="evidence" value="ECO:0000315"/>
    <property type="project" value="MGI"/>
</dbReference>
<dbReference type="GO" id="GO:0009887">
    <property type="term" value="P:animal organ morphogenesis"/>
    <property type="evidence" value="ECO:0000315"/>
    <property type="project" value="MGI"/>
</dbReference>
<dbReference type="GO" id="GO:0006915">
    <property type="term" value="P:apoptotic process"/>
    <property type="evidence" value="ECO:0000304"/>
    <property type="project" value="MGI"/>
</dbReference>
<dbReference type="GO" id="GO:0090398">
    <property type="term" value="P:cellular senescence"/>
    <property type="evidence" value="ECO:0000315"/>
    <property type="project" value="MGI"/>
</dbReference>
<dbReference type="GO" id="GO:0006338">
    <property type="term" value="P:chromatin remodeling"/>
    <property type="evidence" value="ECO:0000315"/>
    <property type="project" value="MGI"/>
</dbReference>
<dbReference type="GO" id="GO:0060197">
    <property type="term" value="P:cloacal septation"/>
    <property type="evidence" value="ECO:0000315"/>
    <property type="project" value="MGI"/>
</dbReference>
<dbReference type="GO" id="GO:1904888">
    <property type="term" value="P:cranial skeletal system development"/>
    <property type="evidence" value="ECO:0000315"/>
    <property type="project" value="MGI"/>
</dbReference>
<dbReference type="GO" id="GO:0008340">
    <property type="term" value="P:determination of adult lifespan"/>
    <property type="evidence" value="ECO:0000315"/>
    <property type="project" value="MGI"/>
</dbReference>
<dbReference type="GO" id="GO:0007499">
    <property type="term" value="P:ectoderm and mesoderm interaction"/>
    <property type="evidence" value="ECO:0000315"/>
    <property type="project" value="MGI"/>
</dbReference>
<dbReference type="GO" id="GO:0035115">
    <property type="term" value="P:embryonic forelimb morphogenesis"/>
    <property type="evidence" value="ECO:0000315"/>
    <property type="project" value="MGI"/>
</dbReference>
<dbReference type="GO" id="GO:0035116">
    <property type="term" value="P:embryonic hindlimb morphogenesis"/>
    <property type="evidence" value="ECO:0000315"/>
    <property type="project" value="MGI"/>
</dbReference>
<dbReference type="GO" id="GO:0030326">
    <property type="term" value="P:embryonic limb morphogenesis"/>
    <property type="evidence" value="ECO:0000315"/>
    <property type="project" value="MGI"/>
</dbReference>
<dbReference type="GO" id="GO:0009913">
    <property type="term" value="P:epidermal cell differentiation"/>
    <property type="evidence" value="ECO:0000315"/>
    <property type="project" value="MGI"/>
</dbReference>
<dbReference type="GO" id="GO:0010481">
    <property type="term" value="P:epidermal cell division"/>
    <property type="evidence" value="ECO:0000315"/>
    <property type="project" value="MGI"/>
</dbReference>
<dbReference type="GO" id="GO:0008544">
    <property type="term" value="P:epidermis development"/>
    <property type="evidence" value="ECO:0000315"/>
    <property type="project" value="MGI"/>
</dbReference>
<dbReference type="GO" id="GO:0002064">
    <property type="term" value="P:epithelial cell development"/>
    <property type="evidence" value="ECO:0000315"/>
    <property type="project" value="MGI"/>
</dbReference>
<dbReference type="GO" id="GO:0030855">
    <property type="term" value="P:epithelial cell differentiation"/>
    <property type="evidence" value="ECO:0000315"/>
    <property type="project" value="MGI"/>
</dbReference>
<dbReference type="GO" id="GO:0001736">
    <property type="term" value="P:establishment of planar polarity"/>
    <property type="evidence" value="ECO:0000314"/>
    <property type="project" value="MGI"/>
</dbReference>
<dbReference type="GO" id="GO:0061436">
    <property type="term" value="P:establishment of skin barrier"/>
    <property type="evidence" value="ECO:0000315"/>
    <property type="project" value="UniProtKB"/>
</dbReference>
<dbReference type="GO" id="GO:0048807">
    <property type="term" value="P:female genitalia morphogenesis"/>
    <property type="evidence" value="ECO:0000315"/>
    <property type="project" value="MGI"/>
</dbReference>
<dbReference type="GO" id="GO:0008585">
    <property type="term" value="P:female gonad development"/>
    <property type="evidence" value="ECO:0000315"/>
    <property type="project" value="MGI"/>
</dbReference>
<dbReference type="GO" id="GO:0001942">
    <property type="term" value="P:hair follicle development"/>
    <property type="evidence" value="ECO:0000315"/>
    <property type="project" value="MGI"/>
</dbReference>
<dbReference type="GO" id="GO:0031069">
    <property type="term" value="P:hair follicle morphogenesis"/>
    <property type="evidence" value="ECO:0000315"/>
    <property type="project" value="MGI"/>
</dbReference>
<dbReference type="GO" id="GO:0042771">
    <property type="term" value="P:intrinsic apoptotic signaling pathway in response to DNA damage by p53 class mediator"/>
    <property type="evidence" value="ECO:0000315"/>
    <property type="project" value="MGI"/>
</dbReference>
<dbReference type="GO" id="GO:0003334">
    <property type="term" value="P:keratinocyte development"/>
    <property type="evidence" value="ECO:0000314"/>
    <property type="project" value="MGI"/>
</dbReference>
<dbReference type="GO" id="GO:0030216">
    <property type="term" value="P:keratinocyte differentiation"/>
    <property type="evidence" value="ECO:0000314"/>
    <property type="project" value="MGI"/>
</dbReference>
<dbReference type="GO" id="GO:0043616">
    <property type="term" value="P:keratinocyte proliferation"/>
    <property type="evidence" value="ECO:0000314"/>
    <property type="project" value="MGI"/>
</dbReference>
<dbReference type="GO" id="GO:0001738">
    <property type="term" value="P:morphogenesis of a polarized epithelium"/>
    <property type="evidence" value="ECO:0000315"/>
    <property type="project" value="MGI"/>
</dbReference>
<dbReference type="GO" id="GO:0033147">
    <property type="term" value="P:negative regulation of intracellular estrogen receptor signaling pathway"/>
    <property type="evidence" value="ECO:0000315"/>
    <property type="project" value="CAFA"/>
</dbReference>
<dbReference type="GO" id="GO:0045617">
    <property type="term" value="P:negative regulation of keratinocyte differentiation"/>
    <property type="evidence" value="ECO:0000315"/>
    <property type="project" value="MGI"/>
</dbReference>
<dbReference type="GO" id="GO:2000381">
    <property type="term" value="P:negative regulation of mesoderm development"/>
    <property type="evidence" value="ECO:0000315"/>
    <property type="project" value="MGI"/>
</dbReference>
<dbReference type="GO" id="GO:0000122">
    <property type="term" value="P:negative regulation of transcription by RNA polymerase II"/>
    <property type="evidence" value="ECO:0000314"/>
    <property type="project" value="MGI"/>
</dbReference>
<dbReference type="GO" id="GO:0051402">
    <property type="term" value="P:neuron apoptotic process"/>
    <property type="evidence" value="ECO:0000315"/>
    <property type="project" value="MGI"/>
</dbReference>
<dbReference type="GO" id="GO:0007219">
    <property type="term" value="P:Notch signaling pathway"/>
    <property type="evidence" value="ECO:0000315"/>
    <property type="project" value="MGI"/>
</dbReference>
<dbReference type="GO" id="GO:0042475">
    <property type="term" value="P:odontogenesis of dentin-containing tooth"/>
    <property type="evidence" value="ECO:0000315"/>
    <property type="project" value="MGI"/>
</dbReference>
<dbReference type="GO" id="GO:0007389">
    <property type="term" value="P:pattern specification process"/>
    <property type="evidence" value="ECO:0000315"/>
    <property type="project" value="MGI"/>
</dbReference>
<dbReference type="GO" id="GO:0030859">
    <property type="term" value="P:polarized epithelial cell differentiation"/>
    <property type="evidence" value="ECO:0000315"/>
    <property type="project" value="MGI"/>
</dbReference>
<dbReference type="GO" id="GO:2001235">
    <property type="term" value="P:positive regulation of apoptotic signaling pathway"/>
    <property type="evidence" value="ECO:0000314"/>
    <property type="project" value="MGI"/>
</dbReference>
<dbReference type="GO" id="GO:2000271">
    <property type="term" value="P:positive regulation of fibroblast apoptotic process"/>
    <property type="evidence" value="ECO:0007669"/>
    <property type="project" value="Ensembl"/>
</dbReference>
<dbReference type="GO" id="GO:0010838">
    <property type="term" value="P:positive regulation of keratinocyte proliferation"/>
    <property type="evidence" value="ECO:0000316"/>
    <property type="project" value="MGI"/>
</dbReference>
<dbReference type="GO" id="GO:0045747">
    <property type="term" value="P:positive regulation of Notch signaling pathway"/>
    <property type="evidence" value="ECO:0000315"/>
    <property type="project" value="MGI"/>
</dbReference>
<dbReference type="GO" id="GO:0045669">
    <property type="term" value="P:positive regulation of osteoblast differentiation"/>
    <property type="evidence" value="ECO:0007669"/>
    <property type="project" value="Ensembl"/>
</dbReference>
<dbReference type="GO" id="GO:1904674">
    <property type="term" value="P:positive regulation of somatic stem cell population maintenance"/>
    <property type="evidence" value="ECO:0000315"/>
    <property type="project" value="CAFA"/>
</dbReference>
<dbReference type="GO" id="GO:2000648">
    <property type="term" value="P:positive regulation of stem cell proliferation"/>
    <property type="evidence" value="ECO:0000316"/>
    <property type="project" value="MGI"/>
</dbReference>
<dbReference type="GO" id="GO:0045944">
    <property type="term" value="P:positive regulation of transcription by RNA polymerase II"/>
    <property type="evidence" value="ECO:0000314"/>
    <property type="project" value="MGI"/>
</dbReference>
<dbReference type="GO" id="GO:0036342">
    <property type="term" value="P:post-anal tail morphogenesis"/>
    <property type="evidence" value="ECO:0000315"/>
    <property type="project" value="MGI"/>
</dbReference>
<dbReference type="GO" id="GO:0030850">
    <property type="term" value="P:prostate gland development"/>
    <property type="evidence" value="ECO:0000315"/>
    <property type="project" value="MGI"/>
</dbReference>
<dbReference type="GO" id="GO:0060513">
    <property type="term" value="P:prostatic bud formation"/>
    <property type="evidence" value="ECO:0000315"/>
    <property type="project" value="MGI"/>
</dbReference>
<dbReference type="GO" id="GO:0051262">
    <property type="term" value="P:protein tetramerization"/>
    <property type="evidence" value="ECO:0007669"/>
    <property type="project" value="InterPro"/>
</dbReference>
<dbReference type="GO" id="GO:0009954">
    <property type="term" value="P:proximal/distal pattern formation"/>
    <property type="evidence" value="ECO:0000315"/>
    <property type="project" value="MGI"/>
</dbReference>
<dbReference type="GO" id="GO:0010482">
    <property type="term" value="P:regulation of epidermal cell division"/>
    <property type="evidence" value="ECO:0000315"/>
    <property type="project" value="UniProtKB"/>
</dbReference>
<dbReference type="GO" id="GO:0001501">
    <property type="term" value="P:skeletal system development"/>
    <property type="evidence" value="ECO:0000315"/>
    <property type="project" value="MGI"/>
</dbReference>
<dbReference type="GO" id="GO:0098773">
    <property type="term" value="P:skin epidermis development"/>
    <property type="evidence" value="ECO:0000315"/>
    <property type="project" value="MGI"/>
</dbReference>
<dbReference type="GO" id="GO:0043589">
    <property type="term" value="P:skin morphogenesis"/>
    <property type="evidence" value="ECO:0000315"/>
    <property type="project" value="MGI"/>
</dbReference>
<dbReference type="GO" id="GO:0007283">
    <property type="term" value="P:spermatogenesis"/>
    <property type="evidence" value="ECO:0007669"/>
    <property type="project" value="Ensembl"/>
</dbReference>
<dbReference type="GO" id="GO:0060529">
    <property type="term" value="P:squamous basal epithelial stem cell differentiation involved in prostate gland acinus development"/>
    <property type="evidence" value="ECO:0000315"/>
    <property type="project" value="MGI"/>
</dbReference>
<dbReference type="GO" id="GO:0048863">
    <property type="term" value="P:stem cell differentiation"/>
    <property type="evidence" value="ECO:0000315"/>
    <property type="project" value="MGI"/>
</dbReference>
<dbReference type="GO" id="GO:0072089">
    <property type="term" value="P:stem cell proliferation"/>
    <property type="evidence" value="ECO:0000314"/>
    <property type="project" value="MGI"/>
</dbReference>
<dbReference type="GO" id="GO:0048485">
    <property type="term" value="P:sympathetic nervous system development"/>
    <property type="evidence" value="ECO:0000315"/>
    <property type="project" value="MGI"/>
</dbReference>
<dbReference type="GO" id="GO:0006366">
    <property type="term" value="P:transcription by RNA polymerase II"/>
    <property type="evidence" value="ECO:0000314"/>
    <property type="project" value="MGI"/>
</dbReference>
<dbReference type="CDD" id="cd08367">
    <property type="entry name" value="P53"/>
    <property type="match status" value="1"/>
</dbReference>
<dbReference type="CDD" id="cd09572">
    <property type="entry name" value="SAM_tumor-p63"/>
    <property type="match status" value="1"/>
</dbReference>
<dbReference type="FunFam" id="2.60.40.720:FF:000002">
    <property type="entry name" value="Cellular tumor antigen p53"/>
    <property type="match status" value="1"/>
</dbReference>
<dbReference type="FunFam" id="4.10.170.10:FF:000001">
    <property type="entry name" value="Cellular tumor antigen p53"/>
    <property type="match status" value="1"/>
</dbReference>
<dbReference type="FunFam" id="1.10.150.50:FF:000020">
    <property type="entry name" value="Tumor protein 63 (p63)"/>
    <property type="match status" value="1"/>
</dbReference>
<dbReference type="Gene3D" id="2.60.40.720">
    <property type="match status" value="1"/>
</dbReference>
<dbReference type="Gene3D" id="4.10.170.10">
    <property type="entry name" value="p53-like tetramerisation domain"/>
    <property type="match status" value="1"/>
</dbReference>
<dbReference type="Gene3D" id="1.10.150.50">
    <property type="entry name" value="Transcription Factor, Ets-1"/>
    <property type="match status" value="1"/>
</dbReference>
<dbReference type="InterPro" id="IPR008967">
    <property type="entry name" value="p53-like_TF_DNA-bd_sf"/>
</dbReference>
<dbReference type="InterPro" id="IPR012346">
    <property type="entry name" value="p53/RUNT-type_TF_DNA-bd_sf"/>
</dbReference>
<dbReference type="InterPro" id="IPR011615">
    <property type="entry name" value="p53_DNA-bd"/>
</dbReference>
<dbReference type="InterPro" id="IPR036674">
    <property type="entry name" value="p53_tetramer_sf"/>
</dbReference>
<dbReference type="InterPro" id="IPR010991">
    <property type="entry name" value="p53_tetrameristn"/>
</dbReference>
<dbReference type="InterPro" id="IPR002117">
    <property type="entry name" value="p53_tumour_suppressor"/>
</dbReference>
<dbReference type="InterPro" id="IPR001660">
    <property type="entry name" value="SAM"/>
</dbReference>
<dbReference type="InterPro" id="IPR013761">
    <property type="entry name" value="SAM/pointed_sf"/>
</dbReference>
<dbReference type="InterPro" id="IPR037611">
    <property type="entry name" value="Tumor-p63_SAM"/>
</dbReference>
<dbReference type="PANTHER" id="PTHR11447">
    <property type="entry name" value="CELLULAR TUMOR ANTIGEN P53"/>
    <property type="match status" value="1"/>
</dbReference>
<dbReference type="PANTHER" id="PTHR11447:SF8">
    <property type="entry name" value="TUMOR PROTEIN 63"/>
    <property type="match status" value="1"/>
</dbReference>
<dbReference type="Pfam" id="PF00870">
    <property type="entry name" value="P53"/>
    <property type="match status" value="1"/>
</dbReference>
<dbReference type="Pfam" id="PF07710">
    <property type="entry name" value="P53_tetramer"/>
    <property type="match status" value="1"/>
</dbReference>
<dbReference type="Pfam" id="PF07647">
    <property type="entry name" value="SAM_2"/>
    <property type="match status" value="1"/>
</dbReference>
<dbReference type="PRINTS" id="PR00386">
    <property type="entry name" value="P53SUPPRESSR"/>
</dbReference>
<dbReference type="SMART" id="SM00454">
    <property type="entry name" value="SAM"/>
    <property type="match status" value="1"/>
</dbReference>
<dbReference type="SUPFAM" id="SSF47719">
    <property type="entry name" value="p53 tetramerization domain"/>
    <property type="match status" value="1"/>
</dbReference>
<dbReference type="SUPFAM" id="SSF49417">
    <property type="entry name" value="p53-like transcription factors"/>
    <property type="match status" value="1"/>
</dbReference>
<dbReference type="SUPFAM" id="SSF47769">
    <property type="entry name" value="SAM/Pointed domain"/>
    <property type="match status" value="1"/>
</dbReference>
<dbReference type="PROSITE" id="PS00348">
    <property type="entry name" value="P53"/>
    <property type="match status" value="1"/>
</dbReference>
<gene>
    <name type="primary">Tp63</name>
    <name type="synonym">P63</name>
    <name type="synonym">P73l</name>
    <name type="synonym">Tp73l</name>
    <name type="synonym">Trp63</name>
</gene>
<reference key="1">
    <citation type="journal article" date="1998" name="Mol. Cell">
        <title>p63, a p53 homolog at 3q27-29, encodes multiple products with transactivating, death-inducing, and dominant-negative activities.</title>
        <authorList>
            <person name="Yang A."/>
            <person name="Kaghad M."/>
            <person name="Wang Y."/>
            <person name="Gillett E."/>
            <person name="Fleming M.D."/>
            <person name="Doetsch V."/>
            <person name="Andrews N.C."/>
            <person name="Caput D."/>
            <person name="McKeon F."/>
        </authorList>
    </citation>
    <scope>NUCLEOTIDE SEQUENCE [MRNA] (ISOFORMS 1; 2; 3; 4; 5 AND 6)</scope>
    <scope>TISSUE SPECIFICITY</scope>
</reference>
<reference key="2">
    <citation type="journal article" date="1998" name="Biochem. Biophys. Res. Commun.">
        <title>A second p53-related protein, p73L, with high homology to p73.</title>
        <authorList>
            <person name="Senoo M."/>
            <person name="Seki N."/>
            <person name="Ohira M."/>
            <person name="Sugano S."/>
            <person name="Watanabe M."/>
            <person name="Tachibana M."/>
            <person name="Tanaka T."/>
            <person name="Shinkai Y."/>
            <person name="Kato H."/>
        </authorList>
    </citation>
    <scope>NUCLEOTIDE SEQUENCE [MRNA] (ISOFORM 2)</scope>
    <source>
        <tissue>Thymus</tissue>
    </source>
</reference>
<reference key="3">
    <citation type="submission" date="2002-08" db="EMBL/GenBank/DDBJ databases">
        <authorList>
            <person name="Kui J.S."/>
            <person name="Wang J.H."/>
            <person name="Zhang M.Q."/>
            <person name="Mills A.A."/>
        </authorList>
    </citation>
    <scope>NUCLEOTIDE SEQUENCE [GENOMIC DNA]</scope>
</reference>
<reference key="4">
    <citation type="journal article" date="2005" name="Science">
        <title>The transcriptional landscape of the mammalian genome.</title>
        <authorList>
            <person name="Carninci P."/>
            <person name="Kasukawa T."/>
            <person name="Katayama S."/>
            <person name="Gough J."/>
            <person name="Frith M.C."/>
            <person name="Maeda N."/>
            <person name="Oyama R."/>
            <person name="Ravasi T."/>
            <person name="Lenhard B."/>
            <person name="Wells C."/>
            <person name="Kodzius R."/>
            <person name="Shimokawa K."/>
            <person name="Bajic V.B."/>
            <person name="Brenner S.E."/>
            <person name="Batalov S."/>
            <person name="Forrest A.R."/>
            <person name="Zavolan M."/>
            <person name="Davis M.J."/>
            <person name="Wilming L.G."/>
            <person name="Aidinis V."/>
            <person name="Allen J.E."/>
            <person name="Ambesi-Impiombato A."/>
            <person name="Apweiler R."/>
            <person name="Aturaliya R.N."/>
            <person name="Bailey T.L."/>
            <person name="Bansal M."/>
            <person name="Baxter L."/>
            <person name="Beisel K.W."/>
            <person name="Bersano T."/>
            <person name="Bono H."/>
            <person name="Chalk A.M."/>
            <person name="Chiu K.P."/>
            <person name="Choudhary V."/>
            <person name="Christoffels A."/>
            <person name="Clutterbuck D.R."/>
            <person name="Crowe M.L."/>
            <person name="Dalla E."/>
            <person name="Dalrymple B.P."/>
            <person name="de Bono B."/>
            <person name="Della Gatta G."/>
            <person name="di Bernardo D."/>
            <person name="Down T."/>
            <person name="Engstrom P."/>
            <person name="Fagiolini M."/>
            <person name="Faulkner G."/>
            <person name="Fletcher C.F."/>
            <person name="Fukushima T."/>
            <person name="Furuno M."/>
            <person name="Futaki S."/>
            <person name="Gariboldi M."/>
            <person name="Georgii-Hemming P."/>
            <person name="Gingeras T.R."/>
            <person name="Gojobori T."/>
            <person name="Green R.E."/>
            <person name="Gustincich S."/>
            <person name="Harbers M."/>
            <person name="Hayashi Y."/>
            <person name="Hensch T.K."/>
            <person name="Hirokawa N."/>
            <person name="Hill D."/>
            <person name="Huminiecki L."/>
            <person name="Iacono M."/>
            <person name="Ikeo K."/>
            <person name="Iwama A."/>
            <person name="Ishikawa T."/>
            <person name="Jakt M."/>
            <person name="Kanapin A."/>
            <person name="Katoh M."/>
            <person name="Kawasawa Y."/>
            <person name="Kelso J."/>
            <person name="Kitamura H."/>
            <person name="Kitano H."/>
            <person name="Kollias G."/>
            <person name="Krishnan S.P."/>
            <person name="Kruger A."/>
            <person name="Kummerfeld S.K."/>
            <person name="Kurochkin I.V."/>
            <person name="Lareau L.F."/>
            <person name="Lazarevic D."/>
            <person name="Lipovich L."/>
            <person name="Liu J."/>
            <person name="Liuni S."/>
            <person name="McWilliam S."/>
            <person name="Madan Babu M."/>
            <person name="Madera M."/>
            <person name="Marchionni L."/>
            <person name="Matsuda H."/>
            <person name="Matsuzawa S."/>
            <person name="Miki H."/>
            <person name="Mignone F."/>
            <person name="Miyake S."/>
            <person name="Morris K."/>
            <person name="Mottagui-Tabar S."/>
            <person name="Mulder N."/>
            <person name="Nakano N."/>
            <person name="Nakauchi H."/>
            <person name="Ng P."/>
            <person name="Nilsson R."/>
            <person name="Nishiguchi S."/>
            <person name="Nishikawa S."/>
            <person name="Nori F."/>
            <person name="Ohara O."/>
            <person name="Okazaki Y."/>
            <person name="Orlando V."/>
            <person name="Pang K.C."/>
            <person name="Pavan W.J."/>
            <person name="Pavesi G."/>
            <person name="Pesole G."/>
            <person name="Petrovsky N."/>
            <person name="Piazza S."/>
            <person name="Reed J."/>
            <person name="Reid J.F."/>
            <person name="Ring B.Z."/>
            <person name="Ringwald M."/>
            <person name="Rost B."/>
            <person name="Ruan Y."/>
            <person name="Salzberg S.L."/>
            <person name="Sandelin A."/>
            <person name="Schneider C."/>
            <person name="Schoenbach C."/>
            <person name="Sekiguchi K."/>
            <person name="Semple C.A."/>
            <person name="Seno S."/>
            <person name="Sessa L."/>
            <person name="Sheng Y."/>
            <person name="Shibata Y."/>
            <person name="Shimada H."/>
            <person name="Shimada K."/>
            <person name="Silva D."/>
            <person name="Sinclair B."/>
            <person name="Sperling S."/>
            <person name="Stupka E."/>
            <person name="Sugiura K."/>
            <person name="Sultana R."/>
            <person name="Takenaka Y."/>
            <person name="Taki K."/>
            <person name="Tammoja K."/>
            <person name="Tan S.L."/>
            <person name="Tang S."/>
            <person name="Taylor M.S."/>
            <person name="Tegner J."/>
            <person name="Teichmann S.A."/>
            <person name="Ueda H.R."/>
            <person name="van Nimwegen E."/>
            <person name="Verardo R."/>
            <person name="Wei C.L."/>
            <person name="Yagi K."/>
            <person name="Yamanishi H."/>
            <person name="Zabarovsky E."/>
            <person name="Zhu S."/>
            <person name="Zimmer A."/>
            <person name="Hide W."/>
            <person name="Bult C."/>
            <person name="Grimmond S.M."/>
            <person name="Teasdale R.D."/>
            <person name="Liu E.T."/>
            <person name="Brusic V."/>
            <person name="Quackenbush J."/>
            <person name="Wahlestedt C."/>
            <person name="Mattick J.S."/>
            <person name="Hume D.A."/>
            <person name="Kai C."/>
            <person name="Sasaki D."/>
            <person name="Tomaru Y."/>
            <person name="Fukuda S."/>
            <person name="Kanamori-Katayama M."/>
            <person name="Suzuki M."/>
            <person name="Aoki J."/>
            <person name="Arakawa T."/>
            <person name="Iida J."/>
            <person name="Imamura K."/>
            <person name="Itoh M."/>
            <person name="Kato T."/>
            <person name="Kawaji H."/>
            <person name="Kawagashira N."/>
            <person name="Kawashima T."/>
            <person name="Kojima M."/>
            <person name="Kondo S."/>
            <person name="Konno H."/>
            <person name="Nakano K."/>
            <person name="Ninomiya N."/>
            <person name="Nishio T."/>
            <person name="Okada M."/>
            <person name="Plessy C."/>
            <person name="Shibata K."/>
            <person name="Shiraki T."/>
            <person name="Suzuki S."/>
            <person name="Tagami M."/>
            <person name="Waki K."/>
            <person name="Watahiki A."/>
            <person name="Okamura-Oho Y."/>
            <person name="Suzuki H."/>
            <person name="Kawai J."/>
            <person name="Hayashizaki Y."/>
        </authorList>
    </citation>
    <scope>NUCLEOTIDE SEQUENCE [LARGE SCALE MRNA] OF 1-376 (ISOFORMS 2 AND 4)</scope>
    <source>
        <strain>C57BL/6J</strain>
        <tissue>Head</tissue>
    </source>
</reference>
<reference key="5">
    <citation type="journal article" date="1999" name="Nature">
        <title>p63 is a p53 homologue required for limb and epidermal morphogenesis.</title>
        <authorList>
            <person name="Mills A.A."/>
            <person name="Zheng B."/>
            <person name="Wang X.-J."/>
            <person name="Vogel H."/>
            <person name="Roop D.R."/>
            <person name="Bradley A."/>
        </authorList>
    </citation>
    <scope>FUNCTION IN EPITHELIAL MORPHOGENESIS</scope>
</reference>
<reference key="6">
    <citation type="journal article" date="1999" name="Nature">
        <title>p63 is essential for regenerative proliferation in limb, craniofacial and epithelial development.</title>
        <authorList>
            <person name="Yang A."/>
            <person name="Schweitzer R."/>
            <person name="Sun D."/>
            <person name="Kaghad M."/>
            <person name="Walker N."/>
            <person name="Bronson R.T."/>
            <person name="Tabin C."/>
            <person name="Sharpe A."/>
            <person name="Caput D."/>
            <person name="Crum C."/>
            <person name="McKeon F."/>
        </authorList>
    </citation>
    <scope>FUNCTION IN EPITHELIAL MORPHOGENESIS</scope>
</reference>
<reference key="7">
    <citation type="journal article" date="2002" name="Nature">
        <title>p63 and p73 are required for p53-dependent apoptosis in response to DNA damage.</title>
        <authorList>
            <person name="Flores E.R."/>
            <person name="Tsai K.Y."/>
            <person name="Crowley D."/>
            <person name="Sengupta S."/>
            <person name="Yang A."/>
            <person name="McKeon F."/>
            <person name="Jacks T."/>
        </authorList>
    </citation>
    <scope>FUNCTION IN TP53 DEPENDENT APOPTOSIS</scope>
    <scope>INDUCTION</scope>
</reference>
<reference key="8">
    <citation type="journal article" date="2004" name="Genes Dev.">
        <title>p63 is the molecular switch for initiation of an epithelial stratification program.</title>
        <authorList>
            <person name="Koster M.I."/>
            <person name="Kim S."/>
            <person name="Mills A.A."/>
            <person name="DeMayo F.J."/>
            <person name="Roop D.R."/>
        </authorList>
    </citation>
    <scope>FUNCTION IN EPITHELIAL MORPHOGENESIS</scope>
    <scope>SUBCELLULAR LOCATION</scope>
    <scope>DEVELOPMENTAL STAGE</scope>
</reference>
<reference key="9">
    <citation type="journal article" date="2008" name="Cell Death Differ.">
        <title>WW domain-containing E3 ubiquitin protein ligase 1 targets p63 transcription factor for ubiquitin-mediated proteasomal degradation and regulates apoptosis.</title>
        <authorList>
            <person name="Li Y."/>
            <person name="Zhou Z."/>
            <person name="Chen C."/>
        </authorList>
    </citation>
    <scope>UBIQUITINATION</scope>
    <scope>INTERACTION WITH WWP1</scope>
    <scope>MUTAGENESIS OF TYR-543</scope>
</reference>
<reference key="10">
    <citation type="journal article" date="2012" name="Am. J. Hum. Genet.">
        <title>Exome sequence identifies RIPK4 as the Bartsocas-Papas syndrome locus.</title>
        <authorList>
            <person name="Mitchell K."/>
            <person name="O'Sullivan J."/>
            <person name="Missero C."/>
            <person name="Blair E."/>
            <person name="Richardson R."/>
            <person name="Anderson B."/>
            <person name="Antonini D."/>
            <person name="Murray J.C."/>
            <person name="Shanske A.L."/>
            <person name="Schutte B.C."/>
            <person name="Romano R.A."/>
            <person name="Sinha S."/>
            <person name="Bhaskar S.S."/>
            <person name="Black G.C."/>
            <person name="Dixon J."/>
            <person name="Dixon M.J."/>
        </authorList>
    </citation>
    <scope>FUNCTION IN RIPK4 TRANSACTIVATION</scope>
</reference>
<reference key="11">
    <citation type="journal article" date="2020" name="Dev. Biol.">
        <title>Keratin 13 deficiency causes white sponge nevus in mice.</title>
        <authorList>
            <person name="Simonson L."/>
            <person name="Vold S."/>
            <person name="Mowers C."/>
            <person name="Massey R.J."/>
            <person name="Ong I.M."/>
            <person name="Longley B.J."/>
            <person name="Chang H."/>
        </authorList>
    </citation>
    <scope>DEVELOPMENTAL STAGE</scope>
</reference>
<reference key="12">
    <citation type="journal article" date="2023" name="J. Clin. Invest.">
        <title>TP63 gain-of-function mutations cause premature ovarian insufficiency by inducing oocyte apoptosis.</title>
        <authorList>
            <person name="Huang C."/>
            <person name="Zhao S."/>
            <person name="Yang Y."/>
            <person name="Guo T."/>
            <person name="Ke H."/>
            <person name="Mi X."/>
            <person name="Qin Y."/>
            <person name="Chen Z.J."/>
            <person name="Zhao S."/>
        </authorList>
    </citation>
    <scope>MUTAGENESIS OF ARG-647</scope>
</reference>
<feature type="chain" id="PRO_0000185730" description="Tumor protein 63">
    <location>
        <begin position="1"/>
        <end position="680"/>
    </location>
</feature>
<feature type="domain" description="SAM">
    <location>
        <begin position="541"/>
        <end position="607"/>
    </location>
</feature>
<feature type="DNA-binding region" evidence="1">
    <location>
        <begin position="170"/>
        <end position="362"/>
    </location>
</feature>
<feature type="region of interest" description="Transcription activation" evidence="1">
    <location>
        <begin position="1"/>
        <end position="107"/>
    </location>
</feature>
<feature type="region of interest" description="Disordered" evidence="2">
    <location>
        <begin position="123"/>
        <end position="171"/>
    </location>
</feature>
<feature type="region of interest" description="Disordered" evidence="2">
    <location>
        <begin position="351"/>
        <end position="393"/>
    </location>
</feature>
<feature type="region of interest" description="Interaction with HIPK2" evidence="1">
    <location>
        <begin position="352"/>
        <end position="388"/>
    </location>
</feature>
<feature type="region of interest" description="Oligomerization" evidence="1">
    <location>
        <begin position="394"/>
        <end position="443"/>
    </location>
</feature>
<feature type="region of interest" description="Disordered" evidence="2">
    <location>
        <begin position="436"/>
        <end position="472"/>
    </location>
</feature>
<feature type="region of interest" description="Transactivation inhibition" evidence="1">
    <location>
        <begin position="610"/>
        <end position="680"/>
    </location>
</feature>
<feature type="compositionally biased region" description="Polar residues" evidence="2">
    <location>
        <begin position="123"/>
        <end position="157"/>
    </location>
</feature>
<feature type="compositionally biased region" description="Basic and acidic residues" evidence="2">
    <location>
        <begin position="351"/>
        <end position="360"/>
    </location>
</feature>
<feature type="compositionally biased region" description="Polar residues" evidence="2">
    <location>
        <begin position="379"/>
        <end position="389"/>
    </location>
</feature>
<feature type="compositionally biased region" description="Low complexity" evidence="2">
    <location>
        <begin position="437"/>
        <end position="463"/>
    </location>
</feature>
<feature type="binding site" evidence="1">
    <location>
        <position position="244"/>
    </location>
    <ligand>
        <name>Zn(2+)</name>
        <dbReference type="ChEBI" id="CHEBI:29105"/>
    </ligand>
</feature>
<feature type="binding site" evidence="1">
    <location>
        <position position="247"/>
    </location>
    <ligand>
        <name>Zn(2+)</name>
        <dbReference type="ChEBI" id="CHEBI:29105"/>
    </ligand>
</feature>
<feature type="binding site" evidence="1">
    <location>
        <position position="308"/>
    </location>
    <ligand>
        <name>Zn(2+)</name>
        <dbReference type="ChEBI" id="CHEBI:29105"/>
    </ligand>
</feature>
<feature type="binding site" evidence="1">
    <location>
        <position position="312"/>
    </location>
    <ligand>
        <name>Zn(2+)</name>
        <dbReference type="ChEBI" id="CHEBI:29105"/>
    </ligand>
</feature>
<feature type="cross-link" description="Glycyl lysine isopeptide (Lys-Gly) (interchain with G-Cter in SUMO)" evidence="1">
    <location>
        <position position="676"/>
    </location>
</feature>
<feature type="splice variant" id="VSP_012471" description="In isoform 2, isoform 4 and isoform 6." evidence="12 13 14">
    <original>MNFETSRCATLQYCPDPYIQRFIETPAHFSWKESYYRSAMSQSTQTSEFLSPEVFQHIWDFLEQPICSVQPIELNFVDEPSENGATNKIEISMDCIRMQDSDLSDPMW</original>
    <variation>MLYLENNAQTQFSE</variation>
    <location>
        <begin position="1"/>
        <end position="108"/>
    </location>
</feature>
<feature type="splice variant" id="VSP_012472" description="In isoform 5 and isoform 6." evidence="14">
    <original>GTKRP</original>
    <variation>A</variation>
    <location>
        <begin position="373"/>
        <end position="377"/>
    </location>
</feature>
<feature type="splice variant" id="VSP_012473" description="In isoform 5 and isoform 6." evidence="14">
    <original>QTSMQSQSSYGNSSPPLNKMNSMNKLPSVSQLINPQQRNALTPTTMPEGMGANIPMMGTHMPMAGDMNGLSPTQALPPPLSMPSTSHCTPPPPYPTDCSIVSFLARLGCSSCLDYFTTQGLTTIYQIEHYSMDDLASLKIPEQFRHAIWKGILDHRQLHDFSSPPHLLRTPSGASTVSVGSSETRGERVIDAVRFTLRQTISFPPRDEWNDFNFDMDSRRNKQQRIKEEGE</original>
    <variation>HLLSACFRNELVEPRGEAPTQSDVFFRHSNPPNHSVYP</variation>
    <location>
        <begin position="450"/>
        <end position="680"/>
    </location>
</feature>
<feature type="splice variant" id="VSP_012474" description="In isoform 3 and isoform 4." evidence="12 14">
    <original>SFLARLGCSSCLDYFTTQGLTTIYQIEHYSMDDLASLKIPEQFRHAIWKGILDHRQLHDFSSPPHLLRTPSGASTVSVGSSETRGERVIDAVRFTLRQTISFPPRDEWNDFNFDMDSRRNKQQRIKEEGE</original>
    <variation>RIWQV</variation>
    <location>
        <begin position="551"/>
        <end position="680"/>
    </location>
</feature>
<feature type="mutagenesis site" description="Abolishes interaction with WWP1." evidence="7">
    <original>Y</original>
    <variation>F</variation>
    <location>
        <position position="543"/>
    </location>
</feature>
<feature type="mutagenesis site" description="Heterozygous mutant mice have reduced fertility, reduced ovary size and accelerated oocyte loss via apoptosis." evidence="10">
    <original>R</original>
    <variation>C</variation>
    <location>
        <position position="647"/>
    </location>
</feature>
<feature type="helix" evidence="16">
    <location>
        <begin position="549"/>
        <end position="556"/>
    </location>
</feature>
<feature type="helix" evidence="16">
    <location>
        <begin position="560"/>
        <end position="568"/>
    </location>
</feature>
<feature type="helix" evidence="16">
    <location>
        <begin position="573"/>
        <end position="576"/>
    </location>
</feature>
<feature type="helix" evidence="16">
    <location>
        <begin position="581"/>
        <end position="586"/>
    </location>
</feature>
<feature type="helix" evidence="16">
    <location>
        <begin position="591"/>
        <end position="607"/>
    </location>
</feature>
<name>P63_MOUSE</name>
<evidence type="ECO:0000250" key="1"/>
<evidence type="ECO:0000256" key="2">
    <source>
        <dbReference type="SAM" id="MobiDB-lite"/>
    </source>
</evidence>
<evidence type="ECO:0000269" key="3">
    <source>
    </source>
</evidence>
<evidence type="ECO:0000269" key="4">
    <source>
    </source>
</evidence>
<evidence type="ECO:0000269" key="5">
    <source>
    </source>
</evidence>
<evidence type="ECO:0000269" key="6">
    <source>
    </source>
</evidence>
<evidence type="ECO:0000269" key="7">
    <source>
    </source>
</evidence>
<evidence type="ECO:0000269" key="8">
    <source>
    </source>
</evidence>
<evidence type="ECO:0000269" key="9">
    <source>
    </source>
</evidence>
<evidence type="ECO:0000269" key="10">
    <source>
    </source>
</evidence>
<evidence type="ECO:0000269" key="11">
    <source>
    </source>
</evidence>
<evidence type="ECO:0000303" key="12">
    <source>
    </source>
</evidence>
<evidence type="ECO:0000303" key="13">
    <source>
    </source>
</evidence>
<evidence type="ECO:0000303" key="14">
    <source>
    </source>
</evidence>
<evidence type="ECO:0000305" key="15"/>
<evidence type="ECO:0007829" key="16">
    <source>
        <dbReference type="PDB" id="5N2O"/>
    </source>
</evidence>
<protein>
    <recommendedName>
        <fullName>Tumor protein 63</fullName>
        <shortName>p63</shortName>
    </recommendedName>
    <alternativeName>
        <fullName>Transformation-related protein 63</fullName>
        <shortName>TP63</shortName>
    </alternativeName>
    <alternativeName>
        <fullName>Tumor protein p73-like</fullName>
        <shortName>p73L</shortName>
    </alternativeName>
</protein>
<proteinExistence type="evidence at protein level"/>
<accession>O88898</accession>
<accession>O88897</accession>
<accession>O88899</accession>
<accession>O89097</accession>
<accession>Q8C826</accession>
<accession>Q9QWY9</accession>
<accession>Q9QWZ0</accession>
<sequence>MNFETSRCATLQYCPDPYIQRFIETPAHFSWKESYYRSAMSQSTQTSEFLSPEVFQHIWDFLEQPICSVQPIELNFVDEPSENGATNKIEISMDCIRMQDSDLSDPMWPQYTNLGLLNSMDQQIQNGSSSTSPYNTDHAQNSVTAPSPYAQPSSTFDALSPSPAIPSNTDYPGPHSFDVSFQQSSTAKSATWTYSTELKKLYCQIAKTCPIQIKVMTPPPQGAVIRAMPVYKKAEHVTEVVKRCPNHELSREFNEGQIAPPSHLIRVEGNSHAQYVEDPITGRQSVLVPYEPPQVGTEFTTVLYNFMCNSSCVGGMNRRPILIIVTLETRDGQVLGRRCFEARICACPGRDRKADEDSIRKQQVSDSAKNGDGTKRPFRQNTHGIQMTSIKKRRSPDDELLYLPVRGRETYEMLLKIKESLELMQYLPQHTIETYRQQQQQQHQHLLQKQTSMQSQSSYGNSSPPLNKMNSMNKLPSVSQLINPQQRNALTPTTMPEGMGANIPMMGTHMPMAGDMNGLSPTQALPPPLSMPSTSHCTPPPPYPTDCSIVSFLARLGCSSCLDYFTTQGLTTIYQIEHYSMDDLASLKIPEQFRHAIWKGILDHRQLHDFSSPPHLLRTPSGASTVSVGSSETRGERVIDAVRFTLRQTISFPPRDEWNDFNFDMDSRRNKQQRIKEEGE</sequence>
<keyword id="KW-0002">3D-structure</keyword>
<keyword id="KW-0010">Activator</keyword>
<keyword id="KW-0877">Alternative promoter usage</keyword>
<keyword id="KW-0025">Alternative splicing</keyword>
<keyword id="KW-0053">Apoptosis</keyword>
<keyword id="KW-0217">Developmental protein</keyword>
<keyword id="KW-0238">DNA-binding</keyword>
<keyword id="KW-1017">Isopeptide bond</keyword>
<keyword id="KW-0479">Metal-binding</keyword>
<keyword id="KW-0914">Notch signaling pathway</keyword>
<keyword id="KW-0539">Nucleus</keyword>
<keyword id="KW-1185">Reference proteome</keyword>
<keyword id="KW-0804">Transcription</keyword>
<keyword id="KW-0805">Transcription regulation</keyword>
<keyword id="KW-0832">Ubl conjugation</keyword>
<keyword id="KW-0862">Zinc</keyword>